<organism>
    <name type="scientific">Shouchella clausii (strain KSM-K16)</name>
    <name type="common">Alkalihalobacillus clausii</name>
    <dbReference type="NCBI Taxonomy" id="66692"/>
    <lineage>
        <taxon>Bacteria</taxon>
        <taxon>Bacillati</taxon>
        <taxon>Bacillota</taxon>
        <taxon>Bacilli</taxon>
        <taxon>Bacillales</taxon>
        <taxon>Bacillaceae</taxon>
        <taxon>Shouchella</taxon>
    </lineage>
</organism>
<gene>
    <name evidence="1" type="primary">serC</name>
    <name type="ordered locus">ABC1531</name>
</gene>
<reference key="1">
    <citation type="submission" date="2003-10" db="EMBL/GenBank/DDBJ databases">
        <title>The complete genome sequence of the alkaliphilic Bacillus clausii KSM-K16.</title>
        <authorList>
            <person name="Takaki Y."/>
            <person name="Kageyama Y."/>
            <person name="Shimamura S."/>
            <person name="Suzuki H."/>
            <person name="Nishi S."/>
            <person name="Hatada Y."/>
            <person name="Kawai S."/>
            <person name="Ito S."/>
            <person name="Horikoshi K."/>
        </authorList>
    </citation>
    <scope>NUCLEOTIDE SEQUENCE [LARGE SCALE GENOMIC DNA]</scope>
    <source>
        <strain>KSM-K16</strain>
    </source>
</reference>
<proteinExistence type="inferred from homology"/>
<protein>
    <recommendedName>
        <fullName evidence="1">Phosphoserine aminotransferase</fullName>
        <ecNumber evidence="1">2.6.1.52</ecNumber>
    </recommendedName>
    <alternativeName>
        <fullName evidence="1">Phosphohydroxythreonine aminotransferase</fullName>
        <shortName evidence="1">PSAT</shortName>
    </alternativeName>
</protein>
<sequence>MNDVHNFNAGPAALPKQALERAQKELVNFDGTGMSVMELSHRGDTYDRIHTHAIKKIRKLLDVPDDYHILFLQGGASLQFPMVPMNFLDSQATYILTGAWSEKALAEAKHFGKTVIGASGKDGNYKQIPALNQISEHAQDSYVHMTSNNTIYGTQWHAFPNTKAPLVCDMSSDIFSRRIPVNQFGLIYAGAQKNLGPSGVTLVLIQDAFLQRAKSGLPAMLSYDTFVKSNSLYNTPPVFSIYMLGLVLDWLEESGGLTEIENRNKAKAQLLYEAIDESDGFYIGHAAQDSRSNMNVTFTLANDALTSVFLQEAKEAGFVGLNGHRSVGGLRASIYNAVPYASCEALVDFMKQFKNKHAEKGATV</sequence>
<name>SERC_SHOC1</name>
<keyword id="KW-0028">Amino-acid biosynthesis</keyword>
<keyword id="KW-0032">Aminotransferase</keyword>
<keyword id="KW-0963">Cytoplasm</keyword>
<keyword id="KW-0663">Pyridoxal phosphate</keyword>
<keyword id="KW-1185">Reference proteome</keyword>
<keyword id="KW-0718">Serine biosynthesis</keyword>
<keyword id="KW-0808">Transferase</keyword>
<comment type="function">
    <text evidence="1">Catalyzes the reversible conversion of 3-phosphohydroxypyruvate to phosphoserine and of 3-hydroxy-2-oxo-4-phosphonooxybutanoate to phosphohydroxythreonine.</text>
</comment>
<comment type="catalytic activity">
    <reaction evidence="1">
        <text>O-phospho-L-serine + 2-oxoglutarate = 3-phosphooxypyruvate + L-glutamate</text>
        <dbReference type="Rhea" id="RHEA:14329"/>
        <dbReference type="ChEBI" id="CHEBI:16810"/>
        <dbReference type="ChEBI" id="CHEBI:18110"/>
        <dbReference type="ChEBI" id="CHEBI:29985"/>
        <dbReference type="ChEBI" id="CHEBI:57524"/>
        <dbReference type="EC" id="2.6.1.52"/>
    </reaction>
</comment>
<comment type="catalytic activity">
    <reaction evidence="1">
        <text>4-(phosphooxy)-L-threonine + 2-oxoglutarate = (R)-3-hydroxy-2-oxo-4-phosphooxybutanoate + L-glutamate</text>
        <dbReference type="Rhea" id="RHEA:16573"/>
        <dbReference type="ChEBI" id="CHEBI:16810"/>
        <dbReference type="ChEBI" id="CHEBI:29985"/>
        <dbReference type="ChEBI" id="CHEBI:58452"/>
        <dbReference type="ChEBI" id="CHEBI:58538"/>
        <dbReference type="EC" id="2.6.1.52"/>
    </reaction>
</comment>
<comment type="cofactor">
    <cofactor evidence="1">
        <name>pyridoxal 5'-phosphate</name>
        <dbReference type="ChEBI" id="CHEBI:597326"/>
    </cofactor>
    <text evidence="1">Binds 1 pyridoxal phosphate per subunit.</text>
</comment>
<comment type="pathway">
    <text evidence="1">Amino-acid biosynthesis; L-serine biosynthesis; L-serine from 3-phospho-D-glycerate: step 2/3.</text>
</comment>
<comment type="subunit">
    <text evidence="1">Homodimer.</text>
</comment>
<comment type="subcellular location">
    <subcellularLocation>
        <location evidence="1">Cytoplasm</location>
    </subcellularLocation>
</comment>
<comment type="similarity">
    <text evidence="1">Belongs to the class-V pyridoxal-phosphate-dependent aminotransferase family. SerC subfamily.</text>
</comment>
<dbReference type="EC" id="2.6.1.52" evidence="1"/>
<dbReference type="EMBL" id="AP006627">
    <property type="protein sequence ID" value="BAD64066.1"/>
    <property type="molecule type" value="Genomic_DNA"/>
</dbReference>
<dbReference type="RefSeq" id="WP_011246375.1">
    <property type="nucleotide sequence ID" value="NC_006582.1"/>
</dbReference>
<dbReference type="SMR" id="Q5WHT9"/>
<dbReference type="STRING" id="66692.ABC1531"/>
<dbReference type="KEGG" id="bcl:ABC1531"/>
<dbReference type="eggNOG" id="COG1932">
    <property type="taxonomic scope" value="Bacteria"/>
</dbReference>
<dbReference type="HOGENOM" id="CLU_034866_0_2_9"/>
<dbReference type="OrthoDB" id="9809412at2"/>
<dbReference type="UniPathway" id="UPA00135">
    <property type="reaction ID" value="UER00197"/>
</dbReference>
<dbReference type="Proteomes" id="UP000001168">
    <property type="component" value="Chromosome"/>
</dbReference>
<dbReference type="GO" id="GO:0005737">
    <property type="term" value="C:cytoplasm"/>
    <property type="evidence" value="ECO:0007669"/>
    <property type="project" value="UniProtKB-SubCell"/>
</dbReference>
<dbReference type="GO" id="GO:0004648">
    <property type="term" value="F:O-phospho-L-serine:2-oxoglutarate aminotransferase activity"/>
    <property type="evidence" value="ECO:0007669"/>
    <property type="project" value="UniProtKB-UniRule"/>
</dbReference>
<dbReference type="GO" id="GO:0030170">
    <property type="term" value="F:pyridoxal phosphate binding"/>
    <property type="evidence" value="ECO:0007669"/>
    <property type="project" value="UniProtKB-UniRule"/>
</dbReference>
<dbReference type="GO" id="GO:0006564">
    <property type="term" value="P:L-serine biosynthetic process"/>
    <property type="evidence" value="ECO:0007669"/>
    <property type="project" value="UniProtKB-UniRule"/>
</dbReference>
<dbReference type="FunFam" id="3.40.640.10:FF:000010">
    <property type="entry name" value="Phosphoserine aminotransferase"/>
    <property type="match status" value="1"/>
</dbReference>
<dbReference type="FunFam" id="3.90.1150.10:FF:000006">
    <property type="entry name" value="Phosphoserine aminotransferase"/>
    <property type="match status" value="1"/>
</dbReference>
<dbReference type="Gene3D" id="3.90.1150.10">
    <property type="entry name" value="Aspartate Aminotransferase, domain 1"/>
    <property type="match status" value="1"/>
</dbReference>
<dbReference type="Gene3D" id="3.40.640.10">
    <property type="entry name" value="Type I PLP-dependent aspartate aminotransferase-like (Major domain)"/>
    <property type="match status" value="1"/>
</dbReference>
<dbReference type="HAMAP" id="MF_00160">
    <property type="entry name" value="SerC_aminotrans_5"/>
    <property type="match status" value="1"/>
</dbReference>
<dbReference type="InterPro" id="IPR000192">
    <property type="entry name" value="Aminotrans_V_dom"/>
</dbReference>
<dbReference type="InterPro" id="IPR020578">
    <property type="entry name" value="Aminotrans_V_PyrdxlP_BS"/>
</dbReference>
<dbReference type="InterPro" id="IPR022278">
    <property type="entry name" value="Pser_aminoTfrase"/>
</dbReference>
<dbReference type="InterPro" id="IPR015424">
    <property type="entry name" value="PyrdxlP-dep_Trfase"/>
</dbReference>
<dbReference type="InterPro" id="IPR015421">
    <property type="entry name" value="PyrdxlP-dep_Trfase_major"/>
</dbReference>
<dbReference type="InterPro" id="IPR015422">
    <property type="entry name" value="PyrdxlP-dep_Trfase_small"/>
</dbReference>
<dbReference type="NCBIfam" id="NF003764">
    <property type="entry name" value="PRK05355.1"/>
    <property type="match status" value="1"/>
</dbReference>
<dbReference type="NCBIfam" id="TIGR01364">
    <property type="entry name" value="serC_1"/>
    <property type="match status" value="1"/>
</dbReference>
<dbReference type="PANTHER" id="PTHR43247">
    <property type="entry name" value="PHOSPHOSERINE AMINOTRANSFERASE"/>
    <property type="match status" value="1"/>
</dbReference>
<dbReference type="PANTHER" id="PTHR43247:SF1">
    <property type="entry name" value="PHOSPHOSERINE AMINOTRANSFERASE"/>
    <property type="match status" value="1"/>
</dbReference>
<dbReference type="Pfam" id="PF00266">
    <property type="entry name" value="Aminotran_5"/>
    <property type="match status" value="1"/>
</dbReference>
<dbReference type="PIRSF" id="PIRSF000525">
    <property type="entry name" value="SerC"/>
    <property type="match status" value="1"/>
</dbReference>
<dbReference type="SUPFAM" id="SSF53383">
    <property type="entry name" value="PLP-dependent transferases"/>
    <property type="match status" value="1"/>
</dbReference>
<dbReference type="PROSITE" id="PS00595">
    <property type="entry name" value="AA_TRANSFER_CLASS_5"/>
    <property type="match status" value="1"/>
</dbReference>
<accession>Q5WHT9</accession>
<evidence type="ECO:0000255" key="1">
    <source>
        <dbReference type="HAMAP-Rule" id="MF_00160"/>
    </source>
</evidence>
<feature type="chain" id="PRO_0000150152" description="Phosphoserine aminotransferase">
    <location>
        <begin position="1"/>
        <end position="364"/>
    </location>
</feature>
<feature type="binding site" evidence="1">
    <location>
        <position position="42"/>
    </location>
    <ligand>
        <name>L-glutamate</name>
        <dbReference type="ChEBI" id="CHEBI:29985"/>
    </ligand>
</feature>
<feature type="binding site" evidence="1">
    <location>
        <begin position="76"/>
        <end position="77"/>
    </location>
    <ligand>
        <name>pyridoxal 5'-phosphate</name>
        <dbReference type="ChEBI" id="CHEBI:597326"/>
    </ligand>
</feature>
<feature type="binding site" evidence="1">
    <location>
        <position position="100"/>
    </location>
    <ligand>
        <name>pyridoxal 5'-phosphate</name>
        <dbReference type="ChEBI" id="CHEBI:597326"/>
    </ligand>
</feature>
<feature type="binding site" evidence="1">
    <location>
        <position position="150"/>
    </location>
    <ligand>
        <name>pyridoxal 5'-phosphate</name>
        <dbReference type="ChEBI" id="CHEBI:597326"/>
    </ligand>
</feature>
<feature type="binding site" evidence="1">
    <location>
        <position position="169"/>
    </location>
    <ligand>
        <name>pyridoxal 5'-phosphate</name>
        <dbReference type="ChEBI" id="CHEBI:597326"/>
    </ligand>
</feature>
<feature type="binding site" evidence="1">
    <location>
        <position position="192"/>
    </location>
    <ligand>
        <name>pyridoxal 5'-phosphate</name>
        <dbReference type="ChEBI" id="CHEBI:597326"/>
    </ligand>
</feature>
<feature type="binding site" evidence="1">
    <location>
        <begin position="234"/>
        <end position="235"/>
    </location>
    <ligand>
        <name>pyridoxal 5'-phosphate</name>
        <dbReference type="ChEBI" id="CHEBI:597326"/>
    </ligand>
</feature>
<feature type="modified residue" description="N6-(pyridoxal phosphate)lysine" evidence="1">
    <location>
        <position position="193"/>
    </location>
</feature>